<comment type="function">
    <text evidence="5 6">Involved in oxidative DNA damage repair. Initiates repair of A*oxoG to C*G by removing the inappropriately paired adenine base from the DNA backbone. Possesses both adenine and 2-OH-A DNA glycosylase activities.</text>
</comment>
<comment type="catalytic activity">
    <reaction evidence="5">
        <text>Hydrolyzes free adenine bases from 7,8-dihydro-8-oxoguanine:adenine mismatched double-stranded DNA, leaving an apurinic site.</text>
        <dbReference type="EC" id="3.2.2.31"/>
    </reaction>
</comment>
<comment type="cofactor">
    <cofactor evidence="1">
        <name>[4Fe-4S] cluster</name>
        <dbReference type="ChEBI" id="CHEBI:49883"/>
    </cofactor>
    <text evidence="1">Binds 1 [4Fe-4S] cluster. The cluster does not appear to play a role in catalysis, but is probably involved in the proper positioning of the enzyme along the DNA strand.</text>
</comment>
<comment type="subcellular location">
    <subcellularLocation>
        <location evidence="6">Nucleus</location>
    </subcellularLocation>
    <subcellularLocation>
        <location evidence="6">Mitochondrion</location>
    </subcellularLocation>
</comment>
<comment type="tissue specificity">
    <text evidence="6">Expressed in heart, lung, liver, intestine, brain and thymus.</text>
</comment>
<comment type="similarity">
    <text evidence="7">Belongs to the Nth/MutY family.</text>
</comment>
<dbReference type="EC" id="3.2.2.31" evidence="5"/>
<dbReference type="EMBL" id="AY007717">
    <property type="protein sequence ID" value="AAG16632.1"/>
    <property type="molecule type" value="mRNA"/>
</dbReference>
<dbReference type="EMBL" id="AB117938">
    <property type="protein sequence ID" value="BAC98380.1"/>
    <property type="molecule type" value="mRNA"/>
</dbReference>
<dbReference type="EMBL" id="AL683847">
    <property type="status" value="NOT_ANNOTATED_CDS"/>
    <property type="molecule type" value="Genomic_DNA"/>
</dbReference>
<dbReference type="EMBL" id="BC057942">
    <property type="protein sequence ID" value="AAH57942.1"/>
    <property type="molecule type" value="mRNA"/>
</dbReference>
<dbReference type="CCDS" id="CCDS18518.1"/>
<dbReference type="RefSeq" id="NP_001153053.1">
    <property type="nucleotide sequence ID" value="NM_001159581.1"/>
</dbReference>
<dbReference type="RefSeq" id="NP_573513.2">
    <property type="nucleotide sequence ID" value="NM_133250.2"/>
</dbReference>
<dbReference type="RefSeq" id="XP_036020311.1">
    <property type="nucleotide sequence ID" value="XM_036164418.1"/>
</dbReference>
<dbReference type="PDB" id="7EF8">
    <property type="method" value="X-ray"/>
    <property type="resolution" value="2.45 A"/>
    <property type="chains" value="A=35-487"/>
</dbReference>
<dbReference type="PDB" id="7EF9">
    <property type="method" value="X-ray"/>
    <property type="resolution" value="1.97 A"/>
    <property type="chains" value="A=45-487"/>
</dbReference>
<dbReference type="PDB" id="7EFA">
    <property type="method" value="X-ray"/>
    <property type="resolution" value="2.70 A"/>
    <property type="chains" value="B=331-515"/>
</dbReference>
<dbReference type="PDBsum" id="7EF8"/>
<dbReference type="PDBsum" id="7EF9"/>
<dbReference type="PDBsum" id="7EFA"/>
<dbReference type="SMR" id="Q99P21"/>
<dbReference type="BioGRID" id="214159">
    <property type="interactions" value="4"/>
</dbReference>
<dbReference type="FunCoup" id="Q99P21">
    <property type="interactions" value="2143"/>
</dbReference>
<dbReference type="STRING" id="10090.ENSMUSP00000099760"/>
<dbReference type="PhosphoSitePlus" id="Q99P21"/>
<dbReference type="jPOST" id="Q99P21"/>
<dbReference type="PaxDb" id="10090-ENSMUSP00000099760"/>
<dbReference type="ProteomicsDB" id="252617"/>
<dbReference type="Ensembl" id="ENSMUST00000102699.8">
    <property type="protein sequence ID" value="ENSMUSP00000099760.2"/>
    <property type="gene ID" value="ENSMUSG00000028687.18"/>
</dbReference>
<dbReference type="GeneID" id="70603"/>
<dbReference type="KEGG" id="mmu:70603"/>
<dbReference type="UCSC" id="uc008uhm.2">
    <property type="organism name" value="mouse"/>
</dbReference>
<dbReference type="AGR" id="MGI:1917853"/>
<dbReference type="CTD" id="4595"/>
<dbReference type="MGI" id="MGI:1917853">
    <property type="gene designation" value="Mutyh"/>
</dbReference>
<dbReference type="VEuPathDB" id="HostDB:ENSMUSG00000028687"/>
<dbReference type="eggNOG" id="KOG2457">
    <property type="taxonomic scope" value="Eukaryota"/>
</dbReference>
<dbReference type="GeneTree" id="ENSGT00510000047220"/>
<dbReference type="HOGENOM" id="CLU_012862_0_0_1"/>
<dbReference type="InParanoid" id="Q99P21"/>
<dbReference type="OMA" id="CRPGDFN"/>
<dbReference type="OrthoDB" id="10248838at2759"/>
<dbReference type="PhylomeDB" id="Q99P21"/>
<dbReference type="TreeFam" id="TF328549"/>
<dbReference type="Reactome" id="R-MMU-110331">
    <property type="pathway name" value="Cleavage of the damaged purine"/>
</dbReference>
<dbReference type="Reactome" id="R-MMU-110357">
    <property type="pathway name" value="Displacement of DNA glycosylase by APEX1"/>
</dbReference>
<dbReference type="BioGRID-ORCS" id="70603">
    <property type="hits" value="3 hits in 114 CRISPR screens"/>
</dbReference>
<dbReference type="ChiTaRS" id="Mutyh">
    <property type="organism name" value="mouse"/>
</dbReference>
<dbReference type="PRO" id="PR:Q99P21"/>
<dbReference type="Proteomes" id="UP000000589">
    <property type="component" value="Chromosome 4"/>
</dbReference>
<dbReference type="RNAct" id="Q99P21">
    <property type="molecule type" value="protein"/>
</dbReference>
<dbReference type="Bgee" id="ENSMUSG00000028687">
    <property type="expression patterns" value="Expressed in embryonic post-anal tail and 135 other cell types or tissues"/>
</dbReference>
<dbReference type="ExpressionAtlas" id="Q99P21">
    <property type="expression patterns" value="baseline and differential"/>
</dbReference>
<dbReference type="GO" id="GO:0005739">
    <property type="term" value="C:mitochondrion"/>
    <property type="evidence" value="ECO:0007005"/>
    <property type="project" value="MGI"/>
</dbReference>
<dbReference type="GO" id="GO:0005654">
    <property type="term" value="C:nucleoplasm"/>
    <property type="evidence" value="ECO:0000304"/>
    <property type="project" value="Reactome"/>
</dbReference>
<dbReference type="GO" id="GO:0051539">
    <property type="term" value="F:4 iron, 4 sulfur cluster binding"/>
    <property type="evidence" value="ECO:0007669"/>
    <property type="project" value="UniProtKB-KW"/>
</dbReference>
<dbReference type="GO" id="GO:0003677">
    <property type="term" value="F:DNA binding"/>
    <property type="evidence" value="ECO:0007669"/>
    <property type="project" value="InterPro"/>
</dbReference>
<dbReference type="GO" id="GO:0019104">
    <property type="term" value="F:DNA N-glycosylase activity"/>
    <property type="evidence" value="ECO:0000304"/>
    <property type="project" value="MGI"/>
</dbReference>
<dbReference type="GO" id="GO:0046872">
    <property type="term" value="F:metal ion binding"/>
    <property type="evidence" value="ECO:0007669"/>
    <property type="project" value="UniProtKB-KW"/>
</dbReference>
<dbReference type="GO" id="GO:0032407">
    <property type="term" value="F:MutSalpha complex binding"/>
    <property type="evidence" value="ECO:0007669"/>
    <property type="project" value="Ensembl"/>
</dbReference>
<dbReference type="GO" id="GO:0000701">
    <property type="term" value="F:purine-specific mismatch base pair DNA N-glycosylase activity"/>
    <property type="evidence" value="ECO:0000250"/>
    <property type="project" value="UniProtKB"/>
</dbReference>
<dbReference type="GO" id="GO:0006284">
    <property type="term" value="P:base-excision repair"/>
    <property type="evidence" value="ECO:0007669"/>
    <property type="project" value="InterPro"/>
</dbReference>
<dbReference type="GO" id="GO:0006281">
    <property type="term" value="P:DNA repair"/>
    <property type="evidence" value="ECO:0000304"/>
    <property type="project" value="MGI"/>
</dbReference>
<dbReference type="GO" id="GO:0060546">
    <property type="term" value="P:negative regulation of necroptotic process"/>
    <property type="evidence" value="ECO:0000315"/>
    <property type="project" value="CACAO"/>
</dbReference>
<dbReference type="CDD" id="cd00056">
    <property type="entry name" value="ENDO3c"/>
    <property type="match status" value="1"/>
</dbReference>
<dbReference type="CDD" id="cd03431">
    <property type="entry name" value="NUDIX_DNA_Glycosylase_C-MutY"/>
    <property type="match status" value="1"/>
</dbReference>
<dbReference type="FunFam" id="1.10.1670.10:FF:000002">
    <property type="entry name" value="Adenine DNA glycosylase"/>
    <property type="match status" value="1"/>
</dbReference>
<dbReference type="FunFam" id="1.10.340.30:FF:000002">
    <property type="entry name" value="Adenine DNA glycosylase"/>
    <property type="match status" value="1"/>
</dbReference>
<dbReference type="FunFam" id="3.90.79.10:FF:000026">
    <property type="entry name" value="Adenine DNA glycosylase"/>
    <property type="match status" value="1"/>
</dbReference>
<dbReference type="Gene3D" id="1.10.1670.10">
    <property type="entry name" value="Helix-hairpin-Helix base-excision DNA repair enzymes (C-terminal)"/>
    <property type="match status" value="1"/>
</dbReference>
<dbReference type="Gene3D" id="1.10.340.30">
    <property type="entry name" value="Hypothetical protein, domain 2"/>
    <property type="match status" value="1"/>
</dbReference>
<dbReference type="Gene3D" id="3.90.79.10">
    <property type="entry name" value="Nucleoside Triphosphate Pyrophosphohydrolase"/>
    <property type="match status" value="1"/>
</dbReference>
<dbReference type="InterPro" id="IPR011257">
    <property type="entry name" value="DNA_glycosylase"/>
</dbReference>
<dbReference type="InterPro" id="IPR004036">
    <property type="entry name" value="Endonuclease-III-like_CS2"/>
</dbReference>
<dbReference type="InterPro" id="IPR003651">
    <property type="entry name" value="Endonuclease3_FeS-loop_motif"/>
</dbReference>
<dbReference type="InterPro" id="IPR004035">
    <property type="entry name" value="Endouclease-III_FeS-bd_BS"/>
</dbReference>
<dbReference type="InterPro" id="IPR003265">
    <property type="entry name" value="HhH-GPD_domain"/>
</dbReference>
<dbReference type="InterPro" id="IPR023170">
    <property type="entry name" value="HhH_base_excis_C"/>
</dbReference>
<dbReference type="InterPro" id="IPR000445">
    <property type="entry name" value="HhH_motif"/>
</dbReference>
<dbReference type="InterPro" id="IPR044298">
    <property type="entry name" value="MIG/MutY"/>
</dbReference>
<dbReference type="InterPro" id="IPR029119">
    <property type="entry name" value="MutY_C"/>
</dbReference>
<dbReference type="InterPro" id="IPR015797">
    <property type="entry name" value="NUDIX_hydrolase-like_dom_sf"/>
</dbReference>
<dbReference type="InterPro" id="IPR000086">
    <property type="entry name" value="NUDIX_hydrolase_dom"/>
</dbReference>
<dbReference type="PANTHER" id="PTHR42944">
    <property type="entry name" value="ADENINE DNA GLYCOSYLASE"/>
    <property type="match status" value="1"/>
</dbReference>
<dbReference type="PANTHER" id="PTHR42944:SF1">
    <property type="entry name" value="ADENINE DNA GLYCOSYLASE"/>
    <property type="match status" value="1"/>
</dbReference>
<dbReference type="Pfam" id="PF10576">
    <property type="entry name" value="EndIII_4Fe-2S"/>
    <property type="match status" value="1"/>
</dbReference>
<dbReference type="Pfam" id="PF00633">
    <property type="entry name" value="HHH"/>
    <property type="match status" value="1"/>
</dbReference>
<dbReference type="Pfam" id="PF00730">
    <property type="entry name" value="HhH-GPD"/>
    <property type="match status" value="1"/>
</dbReference>
<dbReference type="Pfam" id="PF14815">
    <property type="entry name" value="NUDIX_4"/>
    <property type="match status" value="1"/>
</dbReference>
<dbReference type="SMART" id="SM00478">
    <property type="entry name" value="ENDO3c"/>
    <property type="match status" value="1"/>
</dbReference>
<dbReference type="SMART" id="SM00525">
    <property type="entry name" value="FES"/>
    <property type="match status" value="1"/>
</dbReference>
<dbReference type="SUPFAM" id="SSF48150">
    <property type="entry name" value="DNA-glycosylase"/>
    <property type="match status" value="1"/>
</dbReference>
<dbReference type="SUPFAM" id="SSF55811">
    <property type="entry name" value="Nudix"/>
    <property type="match status" value="1"/>
</dbReference>
<dbReference type="PROSITE" id="PS00764">
    <property type="entry name" value="ENDONUCLEASE_III_1"/>
    <property type="match status" value="1"/>
</dbReference>
<dbReference type="PROSITE" id="PS01155">
    <property type="entry name" value="ENDONUCLEASE_III_2"/>
    <property type="match status" value="1"/>
</dbReference>
<dbReference type="PROSITE" id="PS51462">
    <property type="entry name" value="NUDIX"/>
    <property type="match status" value="1"/>
</dbReference>
<sequence length="515" mass="57723">MKKLQASVRSHKKQPANHKRRRTRALSSSQAKPSSLDGLAKQKREELLQASVSPYHLFSDVADVTAFRSNLLSWYDQEKRDLPWRNLAKEEANSDRRAYAVWVSEVMLQQTQVATVIDYYTRWMQKWPKLQDLASASLEEVNQLWSGLGYYSRGRRLQEGARKVVEELGGHMPRTAETLQQLLPGVGRYTAGAIASIAFDQVTGVVDGNVLRVLCRVRAIGADPTSTLVSHHLWNLAQQLVDPARPGDFNQAAMELGATVCTPQRPLCSHCPVQSLCRAYQRVQRGQLSALPGRPDIEECALNTRQCQLCLTSSSPWDPSMGVANFPRKASRRPPREEYSATCVVEQPGAIGGPLVLLVQRPDSGLLAGLWEFPSVTLEPSEQHQHKALLQELQRWCGPLPAIRLQHLGEVIHIFSHIKLTYQVYSLALDQAPASTAPPGARWLTWEEFCNAAVSTAMKKVFRMYEDHRQGTRKGSKRSQVCPPSSRKKPSLGQQVLDTFFQRHIPTDKPNSTTQ</sequence>
<organism>
    <name type="scientific">Mus musculus</name>
    <name type="common">Mouse</name>
    <dbReference type="NCBI Taxonomy" id="10090"/>
    <lineage>
        <taxon>Eukaryota</taxon>
        <taxon>Metazoa</taxon>
        <taxon>Chordata</taxon>
        <taxon>Craniata</taxon>
        <taxon>Vertebrata</taxon>
        <taxon>Euteleostomi</taxon>
        <taxon>Mammalia</taxon>
        <taxon>Eutheria</taxon>
        <taxon>Euarchontoglires</taxon>
        <taxon>Glires</taxon>
        <taxon>Rodentia</taxon>
        <taxon>Myomorpha</taxon>
        <taxon>Muroidea</taxon>
        <taxon>Muridae</taxon>
        <taxon>Murinae</taxon>
        <taxon>Mus</taxon>
        <taxon>Mus</taxon>
    </lineage>
</organism>
<gene>
    <name type="primary">Mutyh</name>
    <name type="synonym">Myh</name>
</gene>
<accession>Q99P21</accession>
<accession>A2AGE3</accession>
<name>MUTYH_MOUSE</name>
<proteinExistence type="evidence at protein level"/>
<keyword id="KW-0002">3D-structure</keyword>
<keyword id="KW-0004">4Fe-4S</keyword>
<keyword id="KW-0227">DNA damage</keyword>
<keyword id="KW-0234">DNA repair</keyword>
<keyword id="KW-0326">Glycosidase</keyword>
<keyword id="KW-0378">Hydrolase</keyword>
<keyword id="KW-0408">Iron</keyword>
<keyword id="KW-0411">Iron-sulfur</keyword>
<keyword id="KW-0479">Metal-binding</keyword>
<keyword id="KW-0496">Mitochondrion</keyword>
<keyword id="KW-0539">Nucleus</keyword>
<keyword id="KW-1185">Reference proteome</keyword>
<protein>
    <recommendedName>
        <fullName>Adenine DNA glycosylase</fullName>
        <ecNumber evidence="5">3.2.2.31</ecNumber>
    </recommendedName>
    <alternativeName>
        <fullName>MutY homolog</fullName>
        <shortName>mMYH</shortName>
    </alternativeName>
</protein>
<evidence type="ECO:0000250" key="1"/>
<evidence type="ECO:0000250" key="2">
    <source>
        <dbReference type="UniProtKB" id="P83847"/>
    </source>
</evidence>
<evidence type="ECO:0000255" key="3">
    <source>
        <dbReference type="PROSITE-ProRule" id="PRU00794"/>
    </source>
</evidence>
<evidence type="ECO:0000256" key="4">
    <source>
        <dbReference type="SAM" id="MobiDB-lite"/>
    </source>
</evidence>
<evidence type="ECO:0000269" key="5">
    <source>
    </source>
</evidence>
<evidence type="ECO:0000269" key="6">
    <source>
    </source>
</evidence>
<evidence type="ECO:0000305" key="7"/>
<evidence type="ECO:0007829" key="8">
    <source>
        <dbReference type="PDB" id="7EF8"/>
    </source>
</evidence>
<evidence type="ECO:0007829" key="9">
    <source>
        <dbReference type="PDB" id="7EF9"/>
    </source>
</evidence>
<evidence type="ECO:0007829" key="10">
    <source>
        <dbReference type="PDB" id="7EFA"/>
    </source>
</evidence>
<reference key="1">
    <citation type="journal article" date="2001" name="Nucleic Acids Res.">
        <title>Enhanced activity of adenine-DNA glycosylase (Myh) by apurinic/apyrimidinic endonuclease (Ape1) in mammalian base excision repair of an A/GO mismatch.</title>
        <authorList>
            <person name="Yang H."/>
            <person name="Clendenin W.M."/>
            <person name="Wong D."/>
            <person name="Demple B."/>
            <person name="Slupska M.M."/>
            <person name="Chiang J.-H."/>
            <person name="Miller J.H."/>
        </authorList>
    </citation>
    <scope>NUCLEOTIDE SEQUENCE [MRNA]</scope>
    <scope>FUNCTION</scope>
    <scope>CATALYTIC ACTIVITY</scope>
</reference>
<reference key="2">
    <citation type="journal article" date="2004" name="Nucleic Acids Res.">
        <title>Identification and characterization of two forms of mouse MUTYH proteins encoded by alternatively spliced transcripts.</title>
        <authorList>
            <person name="Ichinoe A."/>
            <person name="Behmanesh M."/>
            <person name="Tominaga Y."/>
            <person name="Ushijima Y."/>
            <person name="Hirano S."/>
            <person name="Sakai Y."/>
            <person name="Tsuchimoto D."/>
            <person name="Sakumi K."/>
            <person name="Wake N."/>
            <person name="Nakabeppu Y."/>
        </authorList>
    </citation>
    <scope>NUCLEOTIDE SEQUENCE [MRNA]</scope>
    <scope>FUNCTION</scope>
    <scope>SUBCELLULAR LOCATION</scope>
    <scope>TISSUE SPECIFICITY</scope>
</reference>
<reference key="3">
    <citation type="journal article" date="2009" name="PLoS Biol.">
        <title>Lineage-specific biology revealed by a finished genome assembly of the mouse.</title>
        <authorList>
            <person name="Church D.M."/>
            <person name="Goodstadt L."/>
            <person name="Hillier L.W."/>
            <person name="Zody M.C."/>
            <person name="Goldstein S."/>
            <person name="She X."/>
            <person name="Bult C.J."/>
            <person name="Agarwala R."/>
            <person name="Cherry J.L."/>
            <person name="DiCuccio M."/>
            <person name="Hlavina W."/>
            <person name="Kapustin Y."/>
            <person name="Meric P."/>
            <person name="Maglott D."/>
            <person name="Birtle Z."/>
            <person name="Marques A.C."/>
            <person name="Graves T."/>
            <person name="Zhou S."/>
            <person name="Teague B."/>
            <person name="Potamousis K."/>
            <person name="Churas C."/>
            <person name="Place M."/>
            <person name="Herschleb J."/>
            <person name="Runnheim R."/>
            <person name="Forrest D."/>
            <person name="Amos-Landgraf J."/>
            <person name="Schwartz D.C."/>
            <person name="Cheng Z."/>
            <person name="Lindblad-Toh K."/>
            <person name="Eichler E.E."/>
            <person name="Ponting C.P."/>
        </authorList>
    </citation>
    <scope>NUCLEOTIDE SEQUENCE [LARGE SCALE GENOMIC DNA]</scope>
    <source>
        <strain>C57BL/6J</strain>
    </source>
</reference>
<reference key="4">
    <citation type="journal article" date="2004" name="Genome Res.">
        <title>The status, quality, and expansion of the NIH full-length cDNA project: the Mammalian Gene Collection (MGC).</title>
        <authorList>
            <consortium name="The MGC Project Team"/>
        </authorList>
    </citation>
    <scope>NUCLEOTIDE SEQUENCE [LARGE SCALE MRNA]</scope>
    <source>
        <strain>FVB/N</strain>
        <tissue>Mammary tumor</tissue>
    </source>
</reference>
<feature type="chain" id="PRO_0000102240" description="Adenine DNA glycosylase">
    <location>
        <begin position="1"/>
        <end position="515"/>
    </location>
</feature>
<feature type="domain" description="Nudix hydrolase" evidence="3">
    <location>
        <begin position="335"/>
        <end position="466"/>
    </location>
</feature>
<feature type="region of interest" description="Disordered" evidence="4">
    <location>
        <begin position="1"/>
        <end position="38"/>
    </location>
</feature>
<feature type="region of interest" description="Disordered" evidence="4">
    <location>
        <begin position="468"/>
        <end position="494"/>
    </location>
</feature>
<feature type="short sequence motif" description="Nudix box">
    <location>
        <begin position="376"/>
        <end position="398"/>
    </location>
</feature>
<feature type="compositionally biased region" description="Basic residues" evidence="4">
    <location>
        <begin position="1"/>
        <end position="24"/>
    </location>
</feature>
<feature type="active site" description="Proton donor/acceptor" evidence="2">
    <location>
        <position position="105"/>
    </location>
</feature>
<feature type="binding site" evidence="1">
    <location>
        <position position="261"/>
    </location>
    <ligand>
        <name>[4Fe-4S] cluster</name>
        <dbReference type="ChEBI" id="CHEBI:49883"/>
    </ligand>
</feature>
<feature type="binding site" evidence="1">
    <location>
        <position position="268"/>
    </location>
    <ligand>
        <name>[4Fe-4S] cluster</name>
        <dbReference type="ChEBI" id="CHEBI:49883"/>
    </ligand>
</feature>
<feature type="binding site" evidence="1">
    <location>
        <position position="271"/>
    </location>
    <ligand>
        <name>[4Fe-4S] cluster</name>
        <dbReference type="ChEBI" id="CHEBI:49883"/>
    </ligand>
</feature>
<feature type="binding site" evidence="1">
    <location>
        <position position="277"/>
    </location>
    <ligand>
        <name>[4Fe-4S] cluster</name>
        <dbReference type="ChEBI" id="CHEBI:49883"/>
    </ligand>
</feature>
<feature type="site" description="Transition state stabilizer" evidence="2">
    <location>
        <position position="207"/>
    </location>
</feature>
<feature type="sequence conflict" description="In Ref. 4; AAH57942." evidence="7" ref="4">
    <original>Q</original>
    <variation>R</variation>
    <location>
        <position position="5"/>
    </location>
</feature>
<feature type="sequence conflict" description="In Ref. 1; AAG16632 and 4; AAH57942." evidence="7" ref="1 4">
    <original>Q</original>
    <variation>E</variation>
    <location>
        <position position="284"/>
    </location>
</feature>
<feature type="sequence conflict" description="In Ref. 1; AAG16632 and 4; AAH57942." evidence="7" ref="1 4">
    <original>TS</original>
    <variation>PP</variation>
    <location>
        <begin position="312"/>
        <end position="313"/>
    </location>
</feature>
<feature type="helix" evidence="9">
    <location>
        <begin position="54"/>
        <end position="56"/>
    </location>
</feature>
<feature type="helix" evidence="9">
    <location>
        <begin position="61"/>
        <end position="78"/>
    </location>
</feature>
<feature type="helix" evidence="9">
    <location>
        <begin position="83"/>
        <end position="90"/>
    </location>
</feature>
<feature type="helix" evidence="9">
    <location>
        <begin position="94"/>
        <end position="108"/>
    </location>
</feature>
<feature type="helix" evidence="9">
    <location>
        <begin position="113"/>
        <end position="126"/>
    </location>
</feature>
<feature type="helix" evidence="9">
    <location>
        <begin position="130"/>
        <end position="134"/>
    </location>
</feature>
<feature type="helix" evidence="9">
    <location>
        <begin position="138"/>
        <end position="145"/>
    </location>
</feature>
<feature type="turn" evidence="8">
    <location>
        <begin position="146"/>
        <end position="148"/>
    </location>
</feature>
<feature type="helix" evidence="9">
    <location>
        <begin position="152"/>
        <end position="167"/>
    </location>
</feature>
<feature type="helix" evidence="9">
    <location>
        <begin position="176"/>
        <end position="182"/>
    </location>
</feature>
<feature type="helix" evidence="9">
    <location>
        <begin position="188"/>
        <end position="199"/>
    </location>
</feature>
<feature type="helix" evidence="9">
    <location>
        <begin position="208"/>
        <end position="217"/>
    </location>
</feature>
<feature type="helix" evidence="9">
    <location>
        <begin position="227"/>
        <end position="240"/>
    </location>
</feature>
<feature type="strand" evidence="9">
    <location>
        <begin position="243"/>
        <end position="245"/>
    </location>
</feature>
<feature type="helix" evidence="9">
    <location>
        <begin position="246"/>
        <end position="259"/>
    </location>
</feature>
<feature type="strand" evidence="9">
    <location>
        <begin position="263"/>
        <end position="265"/>
    </location>
</feature>
<feature type="helix" evidence="9">
    <location>
        <begin position="268"/>
        <end position="270"/>
    </location>
</feature>
<feature type="helix" evidence="9">
    <location>
        <begin position="274"/>
        <end position="276"/>
    </location>
</feature>
<feature type="helix" evidence="9">
    <location>
        <begin position="278"/>
        <end position="283"/>
    </location>
</feature>
<feature type="strand" evidence="9">
    <location>
        <begin position="308"/>
        <end position="310"/>
    </location>
</feature>
<feature type="strand" evidence="8">
    <location>
        <begin position="313"/>
        <end position="315"/>
    </location>
</feature>
<feature type="helix" evidence="9">
    <location>
        <begin position="319"/>
        <end position="325"/>
    </location>
</feature>
<feature type="strand" evidence="9">
    <location>
        <begin position="336"/>
        <end position="347"/>
    </location>
</feature>
<feature type="strand" evidence="9">
    <location>
        <begin position="355"/>
        <end position="360"/>
    </location>
</feature>
<feature type="strand" evidence="9">
    <location>
        <begin position="363"/>
        <end position="365"/>
    </location>
</feature>
<feature type="turn" evidence="9">
    <location>
        <begin position="366"/>
        <end position="369"/>
    </location>
</feature>
<feature type="strand" evidence="9">
    <location>
        <begin position="371"/>
        <end position="373"/>
    </location>
</feature>
<feature type="strand" evidence="9">
    <location>
        <begin position="375"/>
        <end position="378"/>
    </location>
</feature>
<feature type="helix" evidence="9">
    <location>
        <begin position="380"/>
        <end position="382"/>
    </location>
</feature>
<feature type="helix" evidence="9">
    <location>
        <begin position="387"/>
        <end position="397"/>
    </location>
</feature>
<feature type="helix" evidence="9">
    <location>
        <begin position="402"/>
        <end position="404"/>
    </location>
</feature>
<feature type="strand" evidence="9">
    <location>
        <begin position="406"/>
        <end position="414"/>
    </location>
</feature>
<feature type="strand" evidence="9">
    <location>
        <begin position="416"/>
        <end position="428"/>
    </location>
</feature>
<feature type="strand" evidence="9">
    <location>
        <begin position="430"/>
        <end position="432"/>
    </location>
</feature>
<feature type="strand" evidence="9">
    <location>
        <begin position="441"/>
        <end position="444"/>
    </location>
</feature>
<feature type="helix" evidence="9">
    <location>
        <begin position="446"/>
        <end position="450"/>
    </location>
</feature>
<feature type="strand" evidence="9">
    <location>
        <begin position="452"/>
        <end position="454"/>
    </location>
</feature>
<feature type="helix" evidence="9">
    <location>
        <begin position="456"/>
        <end position="468"/>
    </location>
</feature>
<feature type="helix" evidence="10">
    <location>
        <begin position="497"/>
        <end position="499"/>
    </location>
</feature>